<accession>P09391</accession>
<accession>P76691</accession>
<accession>Q2M788</accession>
<accession>Q6BF32</accession>
<evidence type="ECO:0000269" key="1">
    <source>
    </source>
</evidence>
<evidence type="ECO:0000269" key="2">
    <source>
    </source>
</evidence>
<evidence type="ECO:0000269" key="3">
    <source>
    </source>
</evidence>
<evidence type="ECO:0000269" key="4">
    <source>
    </source>
</evidence>
<evidence type="ECO:0000305" key="5"/>
<evidence type="ECO:0000305" key="6">
    <source>
    </source>
</evidence>
<evidence type="ECO:0000305" key="7">
    <source>
    </source>
</evidence>
<evidence type="ECO:0000305" key="8">
    <source>
    </source>
</evidence>
<evidence type="ECO:0000305" key="9">
    <source>
    </source>
</evidence>
<evidence type="ECO:0000305" key="10">
    <source>
    </source>
</evidence>
<evidence type="ECO:0007829" key="11">
    <source>
        <dbReference type="PDB" id="2LEP"/>
    </source>
</evidence>
<evidence type="ECO:0007829" key="12">
    <source>
        <dbReference type="PDB" id="2XOV"/>
    </source>
</evidence>
<evidence type="ECO:0007829" key="13">
    <source>
        <dbReference type="PDB" id="4HDD"/>
    </source>
</evidence>
<evidence type="ECO:0007829" key="14">
    <source>
        <dbReference type="PDB" id="5MTF"/>
    </source>
</evidence>
<evidence type="ECO:0007829" key="15">
    <source>
        <dbReference type="PDB" id="6PJU"/>
    </source>
</evidence>
<proteinExistence type="evidence at protein level"/>
<protein>
    <recommendedName>
        <fullName>Rhomboid protease GlpG</fullName>
        <ecNumber>3.4.21.105</ecNumber>
    </recommendedName>
    <alternativeName>
        <fullName>Intramembrane serine protease</fullName>
    </alternativeName>
</protein>
<organism>
    <name type="scientific">Escherichia coli (strain K12)</name>
    <dbReference type="NCBI Taxonomy" id="83333"/>
    <lineage>
        <taxon>Bacteria</taxon>
        <taxon>Pseudomonadati</taxon>
        <taxon>Pseudomonadota</taxon>
        <taxon>Gammaproteobacteria</taxon>
        <taxon>Enterobacterales</taxon>
        <taxon>Enterobacteriaceae</taxon>
        <taxon>Escherichia</taxon>
    </lineage>
</organism>
<gene>
    <name type="primary">glpG</name>
    <name type="ordered locus">b3424</name>
    <name type="ordered locus">JW5687</name>
</gene>
<dbReference type="EC" id="3.4.21.105"/>
<dbReference type="EMBL" id="M54940">
    <property type="protein sequence ID" value="AAA23890.1"/>
    <property type="molecule type" value="Genomic_DNA"/>
</dbReference>
<dbReference type="EMBL" id="X07520">
    <property type="protein sequence ID" value="CAA30398.1"/>
    <property type="molecule type" value="Genomic_DNA"/>
</dbReference>
<dbReference type="EMBL" id="M96795">
    <property type="protein sequence ID" value="AAC28166.1"/>
    <property type="molecule type" value="Genomic_DNA"/>
</dbReference>
<dbReference type="EMBL" id="U18997">
    <property type="protein sequence ID" value="AAA58222.1"/>
    <property type="status" value="ALT_INIT"/>
    <property type="molecule type" value="Genomic_DNA"/>
</dbReference>
<dbReference type="EMBL" id="U00096">
    <property type="protein sequence ID" value="AAT48182.1"/>
    <property type="molecule type" value="Genomic_DNA"/>
</dbReference>
<dbReference type="EMBL" id="AP009048">
    <property type="protein sequence ID" value="BAE77868.1"/>
    <property type="molecule type" value="Genomic_DNA"/>
</dbReference>
<dbReference type="PIR" id="C65138">
    <property type="entry name" value="BVECGG"/>
</dbReference>
<dbReference type="RefSeq" id="WP_000928723.1">
    <property type="nucleotide sequence ID" value="NZ_LN832404.1"/>
</dbReference>
<dbReference type="RefSeq" id="YP_026220.1">
    <property type="nucleotide sequence ID" value="NC_000913.3"/>
</dbReference>
<dbReference type="PDB" id="2IC8">
    <property type="method" value="X-ray"/>
    <property type="resolution" value="2.10 A"/>
    <property type="chains" value="A=91-272"/>
</dbReference>
<dbReference type="PDB" id="2IRV">
    <property type="method" value="X-ray"/>
    <property type="resolution" value="2.30 A"/>
    <property type="chains" value="A/B=92-273"/>
</dbReference>
<dbReference type="PDB" id="2LEP">
    <property type="method" value="NMR"/>
    <property type="chains" value="A=1-61"/>
</dbReference>
<dbReference type="PDB" id="2NRF">
    <property type="method" value="X-ray"/>
    <property type="resolution" value="2.60 A"/>
    <property type="chains" value="A/B=91-272"/>
</dbReference>
<dbReference type="PDB" id="2O7L">
    <property type="method" value="X-ray"/>
    <property type="resolution" value="2.50 A"/>
    <property type="chains" value="A=93-272"/>
</dbReference>
<dbReference type="PDB" id="2XOV">
    <property type="method" value="X-ray"/>
    <property type="resolution" value="1.65 A"/>
    <property type="chains" value="A=91-271"/>
</dbReference>
<dbReference type="PDB" id="2XOW">
    <property type="method" value="X-ray"/>
    <property type="resolution" value="2.09 A"/>
    <property type="chains" value="A=92-270"/>
</dbReference>
<dbReference type="PDB" id="2XTU">
    <property type="method" value="X-ray"/>
    <property type="resolution" value="1.85 A"/>
    <property type="chains" value="A=91-271"/>
</dbReference>
<dbReference type="PDB" id="2XTV">
    <property type="method" value="X-ray"/>
    <property type="resolution" value="1.70 A"/>
    <property type="chains" value="A=93-272"/>
</dbReference>
<dbReference type="PDB" id="3B44">
    <property type="method" value="X-ray"/>
    <property type="resolution" value="1.70 A"/>
    <property type="chains" value="A=91-270"/>
</dbReference>
<dbReference type="PDB" id="3B45">
    <property type="method" value="X-ray"/>
    <property type="resolution" value="1.90 A"/>
    <property type="chains" value="A=91-270"/>
</dbReference>
<dbReference type="PDB" id="3TXT">
    <property type="method" value="X-ray"/>
    <property type="resolution" value="2.30 A"/>
    <property type="chains" value="A=92-270"/>
</dbReference>
<dbReference type="PDB" id="3UBB">
    <property type="method" value="X-ray"/>
    <property type="resolution" value="2.60 A"/>
    <property type="chains" value="A=91-272"/>
</dbReference>
<dbReference type="PDB" id="3ZEB">
    <property type="method" value="X-ray"/>
    <property type="resolution" value="2.20 A"/>
    <property type="chains" value="A=92-270"/>
</dbReference>
<dbReference type="PDB" id="3ZMH">
    <property type="method" value="X-ray"/>
    <property type="resolution" value="2.30 A"/>
    <property type="chains" value="A=91-270"/>
</dbReference>
<dbReference type="PDB" id="3ZMI">
    <property type="method" value="X-ray"/>
    <property type="resolution" value="2.20 A"/>
    <property type="chains" value="A=92-270"/>
</dbReference>
<dbReference type="PDB" id="3ZMJ">
    <property type="method" value="X-ray"/>
    <property type="resolution" value="2.30 A"/>
    <property type="chains" value="A=92-270"/>
</dbReference>
<dbReference type="PDB" id="3ZOT">
    <property type="method" value="X-ray"/>
    <property type="resolution" value="2.40 A"/>
    <property type="chains" value="A=92-271"/>
</dbReference>
<dbReference type="PDB" id="4H1D">
    <property type="method" value="X-ray"/>
    <property type="resolution" value="2.90 A"/>
    <property type="chains" value="A=92-270"/>
</dbReference>
<dbReference type="PDB" id="4HDD">
    <property type="method" value="X-ray"/>
    <property type="resolution" value="1.35 A"/>
    <property type="chains" value="A=2-74"/>
</dbReference>
<dbReference type="PDB" id="4NJN">
    <property type="method" value="X-ray"/>
    <property type="resolution" value="2.40 A"/>
    <property type="chains" value="A=87-276"/>
</dbReference>
<dbReference type="PDB" id="4NJP">
    <property type="method" value="X-ray"/>
    <property type="resolution" value="2.40 A"/>
    <property type="chains" value="A=87-276"/>
</dbReference>
<dbReference type="PDB" id="5F5B">
    <property type="method" value="X-ray"/>
    <property type="resolution" value="2.30 A"/>
    <property type="chains" value="A=87-276"/>
</dbReference>
<dbReference type="PDB" id="5F5D">
    <property type="method" value="X-ray"/>
    <property type="resolution" value="2.50 A"/>
    <property type="chains" value="A=87-276"/>
</dbReference>
<dbReference type="PDB" id="5F5G">
    <property type="method" value="X-ray"/>
    <property type="resolution" value="2.30 A"/>
    <property type="chains" value="A=87-276"/>
</dbReference>
<dbReference type="PDB" id="5F5J">
    <property type="method" value="X-ray"/>
    <property type="resolution" value="2.40 A"/>
    <property type="chains" value="A=87-276"/>
</dbReference>
<dbReference type="PDB" id="5F5K">
    <property type="method" value="X-ray"/>
    <property type="resolution" value="2.40 A"/>
    <property type="chains" value="A=87-276"/>
</dbReference>
<dbReference type="PDB" id="5MT6">
    <property type="method" value="X-ray"/>
    <property type="resolution" value="2.16 A"/>
    <property type="chains" value="A=91-270"/>
</dbReference>
<dbReference type="PDB" id="5MT7">
    <property type="method" value="X-ray"/>
    <property type="resolution" value="2.05 A"/>
    <property type="chains" value="A=91-271"/>
</dbReference>
<dbReference type="PDB" id="5MT8">
    <property type="method" value="X-ray"/>
    <property type="resolution" value="1.95 A"/>
    <property type="chains" value="A=92-270"/>
</dbReference>
<dbReference type="PDB" id="5MTF">
    <property type="method" value="X-ray"/>
    <property type="resolution" value="1.79 A"/>
    <property type="chains" value="A=87-276"/>
</dbReference>
<dbReference type="PDB" id="6PJ4">
    <property type="method" value="X-ray"/>
    <property type="resolution" value="2.30 A"/>
    <property type="chains" value="A=87-276"/>
</dbReference>
<dbReference type="PDB" id="6PJ5">
    <property type="method" value="X-ray"/>
    <property type="resolution" value="2.40 A"/>
    <property type="chains" value="A=87-276"/>
</dbReference>
<dbReference type="PDB" id="6PJ7">
    <property type="method" value="X-ray"/>
    <property type="resolution" value="2.30 A"/>
    <property type="chains" value="A=87-276"/>
</dbReference>
<dbReference type="PDB" id="6PJ8">
    <property type="method" value="X-ray"/>
    <property type="resolution" value="2.40 A"/>
    <property type="chains" value="A=87-276"/>
</dbReference>
<dbReference type="PDB" id="6PJ9">
    <property type="method" value="X-ray"/>
    <property type="resolution" value="2.50 A"/>
    <property type="chains" value="A=87-276"/>
</dbReference>
<dbReference type="PDB" id="6PJA">
    <property type="method" value="X-ray"/>
    <property type="resolution" value="2.60 A"/>
    <property type="chains" value="A=87-276"/>
</dbReference>
<dbReference type="PDB" id="6PJP">
    <property type="method" value="X-ray"/>
    <property type="resolution" value="2.45 A"/>
    <property type="chains" value="A=87-276"/>
</dbReference>
<dbReference type="PDB" id="6PJQ">
    <property type="method" value="X-ray"/>
    <property type="resolution" value="2.50 A"/>
    <property type="chains" value="A=87-276"/>
</dbReference>
<dbReference type="PDB" id="6PJR">
    <property type="method" value="X-ray"/>
    <property type="resolution" value="2.40 A"/>
    <property type="chains" value="A=87-276"/>
</dbReference>
<dbReference type="PDB" id="6PJU">
    <property type="method" value="X-ray"/>
    <property type="resolution" value="2.50 A"/>
    <property type="chains" value="A=87-276"/>
</dbReference>
<dbReference type="PDB" id="6VJ8">
    <property type="method" value="X-ray"/>
    <property type="resolution" value="2.30 A"/>
    <property type="chains" value="A=87-276"/>
</dbReference>
<dbReference type="PDB" id="6VJ9">
    <property type="method" value="X-ray"/>
    <property type="resolution" value="2.30 A"/>
    <property type="chains" value="A=87-276"/>
</dbReference>
<dbReference type="PDB" id="6XRO">
    <property type="method" value="X-ray"/>
    <property type="resolution" value="2.30 A"/>
    <property type="chains" value="A=87-276"/>
</dbReference>
<dbReference type="PDB" id="6XRP">
    <property type="method" value="X-ray"/>
    <property type="resolution" value="2.40 A"/>
    <property type="chains" value="A=87-276"/>
</dbReference>
<dbReference type="PDB" id="8AB5">
    <property type="method" value="X-ray"/>
    <property type="resolution" value="2.40 A"/>
    <property type="chains" value="A/B=91-270"/>
</dbReference>
<dbReference type="PDBsum" id="2IC8"/>
<dbReference type="PDBsum" id="2IRV"/>
<dbReference type="PDBsum" id="2LEP"/>
<dbReference type="PDBsum" id="2NRF"/>
<dbReference type="PDBsum" id="2O7L"/>
<dbReference type="PDBsum" id="2XOV"/>
<dbReference type="PDBsum" id="2XOW"/>
<dbReference type="PDBsum" id="2XTU"/>
<dbReference type="PDBsum" id="2XTV"/>
<dbReference type="PDBsum" id="3B44"/>
<dbReference type="PDBsum" id="3B45"/>
<dbReference type="PDBsum" id="3TXT"/>
<dbReference type="PDBsum" id="3UBB"/>
<dbReference type="PDBsum" id="3ZEB"/>
<dbReference type="PDBsum" id="3ZMH"/>
<dbReference type="PDBsum" id="3ZMI"/>
<dbReference type="PDBsum" id="3ZMJ"/>
<dbReference type="PDBsum" id="3ZOT"/>
<dbReference type="PDBsum" id="4H1D"/>
<dbReference type="PDBsum" id="4HDD"/>
<dbReference type="PDBsum" id="4NJN"/>
<dbReference type="PDBsum" id="4NJP"/>
<dbReference type="PDBsum" id="5F5B"/>
<dbReference type="PDBsum" id="5F5D"/>
<dbReference type="PDBsum" id="5F5G"/>
<dbReference type="PDBsum" id="5F5J"/>
<dbReference type="PDBsum" id="5F5K"/>
<dbReference type="PDBsum" id="5MT6"/>
<dbReference type="PDBsum" id="5MT7"/>
<dbReference type="PDBsum" id="5MT8"/>
<dbReference type="PDBsum" id="5MTF"/>
<dbReference type="PDBsum" id="6PJ4"/>
<dbReference type="PDBsum" id="6PJ5"/>
<dbReference type="PDBsum" id="6PJ7"/>
<dbReference type="PDBsum" id="6PJ8"/>
<dbReference type="PDBsum" id="6PJ9"/>
<dbReference type="PDBsum" id="6PJA"/>
<dbReference type="PDBsum" id="6PJP"/>
<dbReference type="PDBsum" id="6PJQ"/>
<dbReference type="PDBsum" id="6PJR"/>
<dbReference type="PDBsum" id="6PJU"/>
<dbReference type="PDBsum" id="6VJ8"/>
<dbReference type="PDBsum" id="6VJ9"/>
<dbReference type="PDBsum" id="6XRO"/>
<dbReference type="PDBsum" id="6XRP"/>
<dbReference type="PDBsum" id="8AB5"/>
<dbReference type="SMR" id="P09391"/>
<dbReference type="BioGRID" id="4262105">
    <property type="interactions" value="40"/>
</dbReference>
<dbReference type="BioGRID" id="852245">
    <property type="interactions" value="1"/>
</dbReference>
<dbReference type="DIP" id="DIP-9796N"/>
<dbReference type="FunCoup" id="P09391">
    <property type="interactions" value="73"/>
</dbReference>
<dbReference type="IntAct" id="P09391">
    <property type="interactions" value="3"/>
</dbReference>
<dbReference type="MINT" id="P09391"/>
<dbReference type="STRING" id="511145.b3424"/>
<dbReference type="BindingDB" id="P09391"/>
<dbReference type="ChEMBL" id="CHEMBL4296282"/>
<dbReference type="DrugBank" id="DB02451">
    <property type="generic name" value="B-nonylglucoside"/>
</dbReference>
<dbReference type="DrugBank" id="DB04147">
    <property type="generic name" value="Dodecyldimethylamine N-oxide"/>
</dbReference>
<dbReference type="MEROPS" id="S54.016"/>
<dbReference type="TCDB" id="9.B.104.1.1">
    <property type="family name" value="the rhomboid protease (rhomboid) family"/>
</dbReference>
<dbReference type="PaxDb" id="511145-b3424"/>
<dbReference type="EnsemblBacteria" id="AAT48182">
    <property type="protein sequence ID" value="AAT48182"/>
    <property type="gene ID" value="b3424"/>
</dbReference>
<dbReference type="GeneID" id="86862178"/>
<dbReference type="GeneID" id="947936"/>
<dbReference type="KEGG" id="ecj:JW5687"/>
<dbReference type="KEGG" id="eco:b3424"/>
<dbReference type="KEGG" id="ecoc:C3026_18565"/>
<dbReference type="PATRIC" id="fig|1411691.4.peg.3305"/>
<dbReference type="EchoBASE" id="EB0392"/>
<dbReference type="eggNOG" id="COG0705">
    <property type="taxonomic scope" value="Bacteria"/>
</dbReference>
<dbReference type="HOGENOM" id="CLU_058989_0_0_6"/>
<dbReference type="InParanoid" id="P09391"/>
<dbReference type="OMA" id="LLGHCWI"/>
<dbReference type="OrthoDB" id="9778341at2"/>
<dbReference type="PhylomeDB" id="P09391"/>
<dbReference type="BioCyc" id="EcoCyc:EG10397-MONOMER"/>
<dbReference type="BioCyc" id="MetaCyc:EG10397-MONOMER"/>
<dbReference type="BRENDA" id="3.4.21.105">
    <property type="organism ID" value="2026"/>
</dbReference>
<dbReference type="EvolutionaryTrace" id="P09391"/>
<dbReference type="PRO" id="PR:P09391"/>
<dbReference type="Proteomes" id="UP000000625">
    <property type="component" value="Chromosome"/>
</dbReference>
<dbReference type="GO" id="GO:0005886">
    <property type="term" value="C:plasma membrane"/>
    <property type="evidence" value="ECO:0000314"/>
    <property type="project" value="EcoCyc"/>
</dbReference>
<dbReference type="GO" id="GO:0004175">
    <property type="term" value="F:endopeptidase activity"/>
    <property type="evidence" value="ECO:0000315"/>
    <property type="project" value="EcoCyc"/>
</dbReference>
<dbReference type="GO" id="GO:0042802">
    <property type="term" value="F:identical protein binding"/>
    <property type="evidence" value="ECO:0000353"/>
    <property type="project" value="IntAct"/>
</dbReference>
<dbReference type="GO" id="GO:0004252">
    <property type="term" value="F:serine-type endopeptidase activity"/>
    <property type="evidence" value="ECO:0000314"/>
    <property type="project" value="EcoCyc"/>
</dbReference>
<dbReference type="GO" id="GO:0006508">
    <property type="term" value="P:proteolysis"/>
    <property type="evidence" value="ECO:0000314"/>
    <property type="project" value="EcoCyc"/>
</dbReference>
<dbReference type="FunFam" id="1.20.1540.10:FF:000003">
    <property type="entry name" value="Rhomboid protease GlpG"/>
    <property type="match status" value="1"/>
</dbReference>
<dbReference type="FunFam" id="3.30.70.2350:FF:000001">
    <property type="entry name" value="Rhomboid protease GlpG"/>
    <property type="match status" value="1"/>
</dbReference>
<dbReference type="Gene3D" id="3.30.70.2350">
    <property type="match status" value="1"/>
</dbReference>
<dbReference type="Gene3D" id="1.20.1540.10">
    <property type="entry name" value="Rhomboid-like"/>
    <property type="match status" value="1"/>
</dbReference>
<dbReference type="HAMAP" id="MF_01594">
    <property type="entry name" value="Rhomboid_GlpG"/>
    <property type="match status" value="1"/>
</dbReference>
<dbReference type="InterPro" id="IPR038236">
    <property type="entry name" value="GlpG_N_sf"/>
</dbReference>
<dbReference type="InterPro" id="IPR022732">
    <property type="entry name" value="Peptidase_S54_GlpG_N"/>
</dbReference>
<dbReference type="InterPro" id="IPR022764">
    <property type="entry name" value="Peptidase_S54_rhomboid_dom"/>
</dbReference>
<dbReference type="InterPro" id="IPR035952">
    <property type="entry name" value="Rhomboid-like_sf"/>
</dbReference>
<dbReference type="InterPro" id="IPR023662">
    <property type="entry name" value="Rhomboid_protease_GlpG"/>
</dbReference>
<dbReference type="NCBIfam" id="NF008155">
    <property type="entry name" value="PRK10907.1"/>
    <property type="match status" value="1"/>
</dbReference>
<dbReference type="NCBIfam" id="TIGR04239">
    <property type="entry name" value="rhombo_GlpG"/>
    <property type="match status" value="1"/>
</dbReference>
<dbReference type="PANTHER" id="PTHR43066:SF26">
    <property type="entry name" value="RHOMBOID PROTEASE GLPG"/>
    <property type="match status" value="1"/>
</dbReference>
<dbReference type="PANTHER" id="PTHR43066">
    <property type="entry name" value="RHOMBOID-RELATED PROTEIN"/>
    <property type="match status" value="1"/>
</dbReference>
<dbReference type="Pfam" id="PF01694">
    <property type="entry name" value="Rhomboid"/>
    <property type="match status" value="1"/>
</dbReference>
<dbReference type="Pfam" id="PF12122">
    <property type="entry name" value="Rhomboid_N"/>
    <property type="match status" value="1"/>
</dbReference>
<dbReference type="SUPFAM" id="SSF144091">
    <property type="entry name" value="Rhomboid-like"/>
    <property type="match status" value="1"/>
</dbReference>
<reference key="1">
    <citation type="journal article" date="1988" name="Nucleic Acids Res.">
        <title>Nucleotide sequence of the glpR gene encoding the repressor for the glycerol-3-phosphate regulon of Escherichia coli K12.</title>
        <authorList>
            <person name="Choi Y.-L."/>
            <person name="Kawase S."/>
            <person name="Nishida T."/>
            <person name="Sakai H."/>
            <person name="Komano T."/>
            <person name="Kawamukai M."/>
            <person name="Utsumi R."/>
            <person name="Kohara Y."/>
            <person name="Akiyama K."/>
        </authorList>
    </citation>
    <scope>NUCLEOTIDE SEQUENCE [GENOMIC DNA]</scope>
    <source>
        <strain>K12</strain>
    </source>
</reference>
<reference key="2">
    <citation type="journal article" date="1996" name="J. Bacteriol.">
        <title>Repressor for the sn-glycerol 3-phosphate regulon of Escherichia coli K-12: primary structure and identification of the DNA-binding domain.</title>
        <authorList>
            <person name="Zeng G."/>
            <person name="Ye S."/>
            <person name="Larson T.J."/>
        </authorList>
    </citation>
    <scope>NUCLEOTIDE SEQUENCE [GENOMIC DNA]</scope>
    <scope>PROTEIN SEQUENCE OF 1-8</scope>
    <source>
        <strain>K12</strain>
    </source>
</reference>
<reference key="3">
    <citation type="journal article" date="1997" name="Science">
        <title>The complete genome sequence of Escherichia coli K-12.</title>
        <authorList>
            <person name="Blattner F.R."/>
            <person name="Plunkett G. III"/>
            <person name="Bloch C.A."/>
            <person name="Perna N.T."/>
            <person name="Burland V."/>
            <person name="Riley M."/>
            <person name="Collado-Vides J."/>
            <person name="Glasner J.D."/>
            <person name="Rode C.K."/>
            <person name="Mayhew G.F."/>
            <person name="Gregor J."/>
            <person name="Davis N.W."/>
            <person name="Kirkpatrick H.A."/>
            <person name="Goeden M.A."/>
            <person name="Rose D.J."/>
            <person name="Mau B."/>
            <person name="Shao Y."/>
        </authorList>
    </citation>
    <scope>NUCLEOTIDE SEQUENCE [LARGE SCALE GENOMIC DNA]</scope>
    <source>
        <strain>K12 / MG1655 / ATCC 47076</strain>
    </source>
</reference>
<reference key="4">
    <citation type="journal article" date="2006" name="Nucleic Acids Res.">
        <title>Escherichia coli K-12: a cooperatively developed annotation snapshot -- 2005.</title>
        <authorList>
            <person name="Riley M."/>
            <person name="Abe T."/>
            <person name="Arnaud M.B."/>
            <person name="Berlyn M.K.B."/>
            <person name="Blattner F.R."/>
            <person name="Chaudhuri R.R."/>
            <person name="Glasner J.D."/>
            <person name="Horiuchi T."/>
            <person name="Keseler I.M."/>
            <person name="Kosuge T."/>
            <person name="Mori H."/>
            <person name="Perna N.T."/>
            <person name="Plunkett G. III"/>
            <person name="Rudd K.E."/>
            <person name="Serres M.H."/>
            <person name="Thomas G.H."/>
            <person name="Thomson N.R."/>
            <person name="Wishart D."/>
            <person name="Wanner B.L."/>
        </authorList>
    </citation>
    <scope>SEQUENCE REVISION TO 51-52</scope>
</reference>
<reference key="5">
    <citation type="journal article" date="2006" name="Mol. Syst. Biol.">
        <title>Highly accurate genome sequences of Escherichia coli K-12 strains MG1655 and W3110.</title>
        <authorList>
            <person name="Hayashi K."/>
            <person name="Morooka N."/>
            <person name="Yamamoto Y."/>
            <person name="Fujita K."/>
            <person name="Isono K."/>
            <person name="Choi S."/>
            <person name="Ohtsubo E."/>
            <person name="Baba T."/>
            <person name="Wanner B.L."/>
            <person name="Mori H."/>
            <person name="Horiuchi T."/>
        </authorList>
    </citation>
    <scope>NUCLEOTIDE SEQUENCE [LARGE SCALE GENOMIC DNA]</scope>
    <source>
        <strain>K12 / W3110 / ATCC 27325 / DSM 5911</strain>
    </source>
</reference>
<reference key="6">
    <citation type="journal article" date="2006" name="Nat. Struct. Mol. Biol.">
        <title>Structural analysis of a rhomboid family intramembrane protease reveals a gating mechanism for substrate entry.</title>
        <authorList>
            <person name="Wu Z."/>
            <person name="Yan N."/>
            <person name="Feng L."/>
            <person name="Oberstein A."/>
            <person name="Yan H."/>
            <person name="Baker R.P."/>
            <person name="Gu L."/>
            <person name="Jeffrey P.D."/>
            <person name="Urban S."/>
            <person name="Shi Y."/>
        </authorList>
    </citation>
    <scope>PARTIAL PROTEIN SEQUENCE</scope>
    <scope>X-RAY CRYSTALLOGRAPHY (2.6 ANGSTROMS) OF 87-272</scope>
    <scope>FUNCTION</scope>
    <scope>TOPOLOGY</scope>
    <scope>ACTIVE SITE</scope>
    <scope>DOMAIN</scope>
    <scope>MUTAGENESIS OF SER-201</scope>
</reference>
<reference key="7">
    <citation type="journal article" date="2005" name="Biochemistry">
        <title>Proteolytic action of GlpG, a rhomboid protease in the Escherichia coli cytoplasmic membrane.</title>
        <authorList>
            <person name="Maegawa S."/>
            <person name="Ito K."/>
            <person name="Akiyama Y."/>
        </authorList>
    </citation>
    <scope>FUNCTION</scope>
    <scope>SUBCELLULAR LOCATION</scope>
    <scope>TOPOLOGY</scope>
    <scope>MUTAGENESIS OF ASN-154; SER-201 AND HIS-254</scope>
</reference>
<reference key="8">
    <citation type="journal article" date="2005" name="Science">
        <title>Global topology analysis of the Escherichia coli inner membrane proteome.</title>
        <authorList>
            <person name="Daley D.O."/>
            <person name="Rapp M."/>
            <person name="Granseth E."/>
            <person name="Melen K."/>
            <person name="Drew D."/>
            <person name="von Heijne G."/>
        </authorList>
    </citation>
    <scope>TOPOLOGY [LARGE SCALE ANALYSIS]</scope>
    <source>
        <strain>K12 / MG1655 / ATCC 47076</strain>
    </source>
</reference>
<reference key="9">
    <citation type="journal article" date="2006" name="J. Bacteriol.">
        <title>Functional characterization of Escherichia coli GlpG and additional rhomboid proteins using an aarA mutant of Providencia stuartii.</title>
        <authorList>
            <person name="Clemmer K.M."/>
            <person name="Sturgill G.M."/>
            <person name="Veenstra A."/>
            <person name="Rather P.N."/>
        </authorList>
    </citation>
    <scope>MUTAGENESIS OF ASN-154; SER-201 AND HIS-254</scope>
</reference>
<reference key="10">
    <citation type="journal article" date="2007" name="Mol. Microbiol.">
        <title>The intramembrane active site of GlpG, an E. coli rhomboid protease, is accessible to water and hydrolyses an extramembrane peptide bond of substrates.</title>
        <authorList>
            <person name="Maegawa S."/>
            <person name="Koide K."/>
            <person name="Ito K."/>
            <person name="Akiyama Y."/>
        </authorList>
    </citation>
    <scope>TOPOLOGY</scope>
    <scope>MUTAGENESIS OF GLY-199; SER-201 AND HIS-254</scope>
</reference>
<reference key="11">
    <citation type="journal article" date="2006" name="Nature">
        <title>Crystal structure of a rhomboid family intramembrane protease.</title>
        <authorList>
            <person name="Wang Y."/>
            <person name="Zhang Y."/>
            <person name="Ha Y."/>
        </authorList>
    </citation>
    <scope>X-RAY CRYSTALLOGRAPHY (2.1 ANGSTROMS) OF 91-272</scope>
    <scope>TOPOLOGY</scope>
    <scope>ACTIVE SITE</scope>
</reference>
<reference key="12">
    <citation type="journal article" date="2007" name="Proc. Natl. Acad. Sci. U.S.A.">
        <title>Structural basis for intramembrane proteolysis by rhomboid serine proteases.</title>
        <authorList>
            <person name="Ben-Shem A."/>
            <person name="Fass D."/>
            <person name="Bibi E."/>
        </authorList>
    </citation>
    <scope>X-RAY CRYSTALLOGRAPHY (2.3 ANGSTROMS) OF 92-273</scope>
    <scope>TOPOLOGY</scope>
    <scope>ACTIVE SITE</scope>
</reference>
<reference key="13">
    <citation type="journal article" date="2007" name="Proc. Natl. Acad. Sci. U.S.A.">
        <title>Open-cap conformation of intramembrane protease GlpG.</title>
        <authorList>
            <person name="Wang Y."/>
            <person name="Ha Y."/>
        </authorList>
    </citation>
    <scope>X-RAY CRYSTALLOGRAPHY (2.5 ANGSTROMS) OF 93-272</scope>
    <scope>ACTIVE SITE</scope>
</reference>
<sequence>MLMITSFANPRVAQAFVDYMATQGVILTIQQHNQSDVWLADESQAERVRAELARFLENPADPRYLAASWQAGHTGSGLHYRRYPFFAALRERAGPVTWVMMIACVVVFIAMQILGDQEVMLWLAWPFDPTLKFEFWRYFTHALMHFSLMHILFNLLWWWYLGGAVEKRLGSGKLIVITLISALLSGYVQQKFSGPWFGGLSGVVYALMGYVWLRGERDPQSGIYLQRGLIIFALIWIVAGWFDLFGMSMANGAHIAGLAVGLAMAFVDSLNARKRK</sequence>
<name>GLPG_ECOLI</name>
<feature type="chain" id="PRO_0000087515" description="Rhomboid protease GlpG">
    <location>
        <begin position="1"/>
        <end position="276"/>
    </location>
</feature>
<feature type="topological domain" description="Cytoplasmic" evidence="5">
    <location>
        <begin position="1"/>
        <end position="93"/>
    </location>
</feature>
<feature type="transmembrane region" description="Helical; Name=1" evidence="5">
    <location>
        <begin position="94"/>
        <end position="114"/>
    </location>
</feature>
<feature type="topological domain" description="Periplasmic" evidence="5">
    <location>
        <begin position="115"/>
        <end position="141"/>
    </location>
</feature>
<feature type="transmembrane region" description="Helical; Name=2" evidence="5">
    <location>
        <begin position="142"/>
        <end position="162"/>
    </location>
</feature>
<feature type="topological domain" description="Cytoplasmic" evidence="5">
    <location>
        <begin position="163"/>
        <end position="168"/>
    </location>
</feature>
<feature type="transmembrane region" description="Helical; Name=3" evidence="5">
    <location>
        <begin position="169"/>
        <end position="189"/>
    </location>
</feature>
<feature type="topological domain" description="Periplasmic" evidence="5">
    <location>
        <begin position="190"/>
        <end position="191"/>
    </location>
</feature>
<feature type="transmembrane region" description="Helical; Name=4" evidence="5">
    <location>
        <begin position="192"/>
        <end position="212"/>
    </location>
</feature>
<feature type="topological domain" description="Cytoplasmic" evidence="5">
    <location>
        <begin position="213"/>
        <end position="222"/>
    </location>
</feature>
<feature type="transmembrane region" description="Helical; Name=5" evidence="5">
    <location>
        <begin position="223"/>
        <end position="245"/>
    </location>
</feature>
<feature type="topological domain" description="Periplasmic" evidence="5">
    <location>
        <begin position="246"/>
        <end position="249"/>
    </location>
</feature>
<feature type="transmembrane region" description="Helical; Name=6" evidence="5">
    <location>
        <begin position="250"/>
        <end position="272"/>
    </location>
</feature>
<feature type="topological domain" description="Cytoplasmic" evidence="5">
    <location>
        <begin position="273"/>
        <end position="276"/>
    </location>
</feature>
<feature type="active site" description="Nucleophile" evidence="6 7 8 9">
    <location>
        <position position="201"/>
    </location>
</feature>
<feature type="active site" evidence="6 7 8 9">
    <location>
        <position position="254"/>
    </location>
</feature>
<feature type="mutagenesis site" description="Reduced catalytic activity." evidence="1 2">
    <original>N</original>
    <variation>A</variation>
    <location>
        <position position="154"/>
    </location>
</feature>
<feature type="mutagenesis site" description="Loss of catalytic activity." evidence="4">
    <original>G</original>
    <variation>C</variation>
    <location>
        <position position="199"/>
    </location>
</feature>
<feature type="mutagenesis site" description="Loss of catalytic activity." evidence="1 2 3 4">
    <original>S</original>
    <variation>A</variation>
    <variation>C</variation>
    <location>
        <position position="201"/>
    </location>
</feature>
<feature type="mutagenesis site" description="Loss of catalytic activity." evidence="1 2 4">
    <original>H</original>
    <variation>A</variation>
    <variation>C</variation>
    <location>
        <position position="254"/>
    </location>
</feature>
<feature type="sequence conflict" description="In Ref. 1; AAA23890/CAA30398, 2; AAC28166 and 3; AAA58222." evidence="5" ref="1 2 3">
    <original>EL</original>
    <variation>DV</variation>
    <location>
        <begin position="51"/>
        <end position="52"/>
    </location>
</feature>
<feature type="sequence conflict" description="In Ref. 1; AAA23890/CAA30398." evidence="5" ref="1">
    <original>TL</original>
    <variation>RS</variation>
    <location>
        <begin position="178"/>
        <end position="179"/>
    </location>
</feature>
<feature type="sequence conflict" description="In Ref. 1; AAA23890/CAA30398." evidence="5" ref="1">
    <original>S</original>
    <variation>T</variation>
    <location>
        <position position="193"/>
    </location>
</feature>
<feature type="strand" evidence="11">
    <location>
        <begin position="2"/>
        <end position="9"/>
    </location>
</feature>
<feature type="helix" evidence="13">
    <location>
        <begin position="10"/>
        <end position="22"/>
    </location>
</feature>
<feature type="strand" evidence="11">
    <location>
        <begin position="27"/>
        <end position="30"/>
    </location>
</feature>
<feature type="strand" evidence="11">
    <location>
        <begin position="32"/>
        <end position="40"/>
    </location>
</feature>
<feature type="helix" evidence="13">
    <location>
        <begin position="42"/>
        <end position="44"/>
    </location>
</feature>
<feature type="helix" evidence="13">
    <location>
        <begin position="45"/>
        <end position="57"/>
    </location>
</feature>
<feature type="helix" evidence="13">
    <location>
        <begin position="62"/>
        <end position="65"/>
    </location>
</feature>
<feature type="helix" evidence="12">
    <location>
        <begin position="95"/>
        <end position="114"/>
    </location>
</feature>
<feature type="helix" evidence="12">
    <location>
        <begin position="116"/>
        <end position="123"/>
    </location>
</feature>
<feature type="helix" evidence="12">
    <location>
        <begin position="129"/>
        <end position="131"/>
    </location>
</feature>
<feature type="helix" evidence="12">
    <location>
        <begin position="137"/>
        <end position="140"/>
    </location>
</feature>
<feature type="helix" evidence="12">
    <location>
        <begin position="141"/>
        <end position="143"/>
    </location>
</feature>
<feature type="helix" evidence="12">
    <location>
        <begin position="148"/>
        <end position="169"/>
    </location>
</feature>
<feature type="helix" evidence="12">
    <location>
        <begin position="171"/>
        <end position="193"/>
    </location>
</feature>
<feature type="strand" evidence="15">
    <location>
        <begin position="197"/>
        <end position="199"/>
    </location>
</feature>
<feature type="helix" evidence="12">
    <location>
        <begin position="201"/>
        <end position="217"/>
    </location>
</feature>
<feature type="helix" evidence="12">
    <location>
        <begin position="219"/>
        <end position="221"/>
    </location>
</feature>
<feature type="helix" evidence="12">
    <location>
        <begin position="227"/>
        <end position="241"/>
    </location>
</feature>
<feature type="strand" evidence="14">
    <location>
        <begin position="245"/>
        <end position="247"/>
    </location>
</feature>
<feature type="helix" evidence="12">
    <location>
        <begin position="251"/>
        <end position="270"/>
    </location>
</feature>
<keyword id="KW-0002">3D-structure</keyword>
<keyword id="KW-0997">Cell inner membrane</keyword>
<keyword id="KW-1003">Cell membrane</keyword>
<keyword id="KW-0903">Direct protein sequencing</keyword>
<keyword id="KW-0378">Hydrolase</keyword>
<keyword id="KW-0472">Membrane</keyword>
<keyword id="KW-0645">Protease</keyword>
<keyword id="KW-1185">Reference proteome</keyword>
<keyword id="KW-0720">Serine protease</keyword>
<keyword id="KW-0812">Transmembrane</keyword>
<keyword id="KW-1133">Transmembrane helix</keyword>
<comment type="function">
    <text evidence="1 3">Rhomboid-type serine protease that catalyzes intramembrane proteolysis.</text>
</comment>
<comment type="catalytic activity">
    <reaction>
        <text>Cleaves type-1 transmembrane domains using a catalytic dyad composed of serine and histidine that are contributed by different transmembrane domains.</text>
        <dbReference type="EC" id="3.4.21.105"/>
    </reaction>
</comment>
<comment type="interaction">
    <interactant intactId="EBI-9134140">
        <id>P09391</id>
    </interactant>
    <interactant intactId="EBI-9134140">
        <id>P09391</id>
        <label>glpG</label>
    </interactant>
    <organismsDiffer>false</organismsDiffer>
    <experiments>3</experiments>
</comment>
<comment type="subcellular location">
    <subcellularLocation>
        <location evidence="1">Cell inner membrane</location>
        <topology evidence="1">Multi-pass membrane protein</topology>
    </subcellularLocation>
</comment>
<comment type="domain">
    <text evidence="3">The loop between transmembrane domains 5 and 6 is flexible and may readily open to the extracellular side to allow water entry into the active site cavity.</text>
</comment>
<comment type="similarity">
    <text evidence="5">Belongs to the peptidase S54 family.</text>
</comment>
<comment type="caution">
    <text evidence="10">Was originally identified as a repressor of the glycerol-3-phosphate regulon.</text>
</comment>
<comment type="sequence caution" evidence="5">
    <conflict type="erroneous initiation">
        <sequence resource="EMBL-CDS" id="AAA58222"/>
    </conflict>
</comment>